<evidence type="ECO:0000269" key="1">
    <source>
    </source>
</evidence>
<evidence type="ECO:0000269" key="2">
    <source>
    </source>
</evidence>
<evidence type="ECO:0000305" key="3"/>
<evidence type="ECO:0000305" key="4">
    <source>
    </source>
</evidence>
<sequence>MRNRIMPGVYIVIIPYVIVSICYLLFRHYIPGVSFSAHRDGLGATLSSYAGTMIAILIAALTFLIGSRTRRLAKIREYGYMTSVVIVYALSFVELGALFFCGLLLLSSISGYMIPTIAIGIASASFIHICILVFQLYNLTREQE</sequence>
<proteinExistence type="evidence at protein level"/>
<feature type="chain" id="PRO_0000077708" description="Protein rexB">
    <location>
        <begin position="1"/>
        <end position="144"/>
    </location>
</feature>
<feature type="topological domain" description="Cytoplasmic" evidence="4">
    <location>
        <begin position="1"/>
        <end position="7"/>
    </location>
</feature>
<feature type="transmembrane region" description="Helical" evidence="3">
    <location>
        <begin position="8"/>
        <end position="26"/>
    </location>
</feature>
<feature type="topological domain" description="Periplasmic" evidence="4">
    <location>
        <begin position="27"/>
        <end position="46"/>
    </location>
</feature>
<feature type="transmembrane region" description="Helical" evidence="3">
    <location>
        <begin position="47"/>
        <end position="65"/>
    </location>
</feature>
<feature type="topological domain" description="Cytoplasmic" evidence="4">
    <location>
        <begin position="66"/>
        <end position="85"/>
    </location>
</feature>
<feature type="transmembrane region" description="Helical" evidence="3">
    <location>
        <begin position="86"/>
        <end position="104"/>
    </location>
</feature>
<feature type="topological domain" description="Periplasmic" evidence="4">
    <location>
        <begin position="105"/>
        <end position="115"/>
    </location>
</feature>
<feature type="transmembrane region" description="Helical" evidence="3">
    <location>
        <begin position="116"/>
        <end position="134"/>
    </location>
</feature>
<feature type="topological domain" description="Cytoplasmic" evidence="4">
    <location>
        <begin position="135"/>
        <end position="144"/>
    </location>
</feature>
<organismHost>
    <name type="scientific">Escherichia coli</name>
    <dbReference type="NCBI Taxonomy" id="562"/>
</organismHost>
<dbReference type="EMBL" id="J02459">
    <property type="protein sequence ID" value="AAA96579.1"/>
    <property type="molecule type" value="Genomic_DNA"/>
</dbReference>
<dbReference type="PIR" id="D43010">
    <property type="entry name" value="IMBPBL"/>
</dbReference>
<dbReference type="RefSeq" id="NP_040626.1">
    <property type="nucleotide sequence ID" value="NC_001416.1"/>
</dbReference>
<dbReference type="IntAct" id="P03759">
    <property type="interactions" value="4"/>
</dbReference>
<dbReference type="GeneID" id="2703493"/>
<dbReference type="KEGG" id="vg:2703493"/>
<dbReference type="Proteomes" id="UP000001711">
    <property type="component" value="Genome"/>
</dbReference>
<dbReference type="GO" id="GO:0033644">
    <property type="term" value="C:host cell membrane"/>
    <property type="evidence" value="ECO:0007669"/>
    <property type="project" value="UniProtKB-SubCell"/>
</dbReference>
<dbReference type="GO" id="GO:0016020">
    <property type="term" value="C:membrane"/>
    <property type="evidence" value="ECO:0007669"/>
    <property type="project" value="UniProtKB-KW"/>
</dbReference>
<dbReference type="InterPro" id="IPR031892">
    <property type="entry name" value="RexB"/>
</dbReference>
<dbReference type="Pfam" id="PF15968">
    <property type="entry name" value="RexB"/>
    <property type="match status" value="1"/>
</dbReference>
<accession>P03759</accession>
<protein>
    <recommendedName>
        <fullName>Protein rexB</fullName>
    </recommendedName>
</protein>
<name>REXB_LAMBD</name>
<reference key="1">
    <citation type="journal article" date="1982" name="J. Mol. Biol.">
        <title>Nucleotide sequence of bacteriophage lambda DNA.</title>
        <authorList>
            <person name="Sanger F."/>
            <person name="Coulson A.R."/>
            <person name="Hong G.F."/>
            <person name="Hill D.F."/>
            <person name="Petersen G.B."/>
        </authorList>
    </citation>
    <scope>NUCLEOTIDE SEQUENCE [LARGE SCALE GENOMIC DNA]</scope>
</reference>
<reference key="2">
    <citation type="journal article" date="1991" name="Proc. Natl. Acad. Sci. U.S.A.">
        <title>An additional function for bacteriophage lambda rex: the rexB product prevents degradation of the lambda O protein.</title>
        <authorList>
            <person name="Schoulaker-Schwarz R."/>
            <person name="Dekel-Gorodetsky L."/>
            <person name="Engelberg-Kulka H."/>
        </authorList>
    </citation>
    <scope>FUNCTION</scope>
</reference>
<reference key="3">
    <citation type="journal article" date="1998" name="Proc. Natl. Acad. Sci. U.S.A.">
        <title>rexB of bacteriophage lambda is an anti-cell death gene.</title>
        <authorList>
            <person name="Engelberg-Kulka H."/>
            <person name="Reches M."/>
            <person name="Narasimhan S."/>
            <person name="Schoulaker-Schwarz R."/>
            <person name="Klemes Y."/>
            <person name="Aizenman E."/>
            <person name="Glaser G."/>
        </authorList>
    </citation>
    <scope>FUNCTION</scope>
</reference>
<reference key="4">
    <citation type="journal article" date="1992" name="Genes Dev.">
        <title>The Rex system of bacteriophage lambda: tolerance and altruistic cell death.</title>
        <authorList>
            <person name="Parma D.H."/>
            <person name="Snyder M."/>
            <person name="Sobolevski S."/>
            <person name="Nawroz M."/>
            <person name="Brody E."/>
            <person name="Gold L."/>
        </authorList>
    </citation>
    <scope>TOPOLOGY</scope>
</reference>
<comment type="function">
    <text evidence="1 2">May participate in viral genome replication by preventing the degradation of lambda-O protein (protein playing a role in DNA replication). May also prevent host cell death under conditions of nutrient starvation.</text>
</comment>
<comment type="subcellular location">
    <subcellularLocation>
        <location>Host membrane</location>
        <topology>Multi-pass membrane protein</topology>
    </subcellularLocation>
</comment>
<comment type="caution">
    <text evidence="3">It is uncertain whether Met-1 or Met-6 is the initiator.</text>
</comment>
<keyword id="KW-1043">Host membrane</keyword>
<keyword id="KW-0472">Membrane</keyword>
<keyword id="KW-1185">Reference proteome</keyword>
<keyword id="KW-0812">Transmembrane</keyword>
<keyword id="KW-1133">Transmembrane helix</keyword>
<gene>
    <name type="primary">rexB</name>
    <name type="ordered locus">lambdap53</name>
</gene>
<organism>
    <name type="scientific">Escherichia phage lambda</name>
    <name type="common">Bacteriophage lambda</name>
    <dbReference type="NCBI Taxonomy" id="2681611"/>
    <lineage>
        <taxon>Viruses</taxon>
        <taxon>Duplodnaviria</taxon>
        <taxon>Heunggongvirae</taxon>
        <taxon>Uroviricota</taxon>
        <taxon>Caudoviricetes</taxon>
        <taxon>Lambdavirus</taxon>
        <taxon>Lambdavirus lambda</taxon>
    </lineage>
</organism>